<feature type="chain" id="PRO_0000445105" description="Major facilitator superfamily multidrug transporter FLU1">
    <location>
        <begin position="1"/>
        <end position="610"/>
    </location>
</feature>
<feature type="transmembrane region" description="Helical" evidence="1">
    <location>
        <begin position="165"/>
        <end position="185"/>
    </location>
</feature>
<feature type="transmembrane region" description="Helical" evidence="1">
    <location>
        <begin position="209"/>
        <end position="229"/>
    </location>
</feature>
<feature type="transmembrane region" description="Helical" evidence="1">
    <location>
        <begin position="231"/>
        <end position="251"/>
    </location>
</feature>
<feature type="transmembrane region" description="Helical" evidence="1">
    <location>
        <begin position="262"/>
        <end position="282"/>
    </location>
</feature>
<feature type="transmembrane region" description="Helical" evidence="1">
    <location>
        <begin position="292"/>
        <end position="312"/>
    </location>
</feature>
<feature type="transmembrane region" description="Helical" evidence="1">
    <location>
        <begin position="323"/>
        <end position="343"/>
    </location>
</feature>
<feature type="transmembrane region" description="Helical" evidence="1">
    <location>
        <begin position="408"/>
        <end position="428"/>
    </location>
</feature>
<feature type="transmembrane region" description="Helical" evidence="1">
    <location>
        <begin position="437"/>
        <end position="457"/>
    </location>
</feature>
<feature type="transmembrane region" description="Helical" evidence="1">
    <location>
        <begin position="478"/>
        <end position="498"/>
    </location>
</feature>
<feature type="transmembrane region" description="Helical" evidence="1">
    <location>
        <begin position="507"/>
        <end position="527"/>
    </location>
</feature>
<feature type="transmembrane region" description="Helical" evidence="1">
    <location>
        <begin position="530"/>
        <end position="550"/>
    </location>
</feature>
<feature type="transmembrane region" description="Helical" evidence="1">
    <location>
        <begin position="573"/>
        <end position="593"/>
    </location>
</feature>
<feature type="region of interest" description="Disordered" evidence="3">
    <location>
        <begin position="47"/>
        <end position="74"/>
    </location>
</feature>
<feature type="compositionally biased region" description="Polar residues" evidence="3">
    <location>
        <begin position="47"/>
        <end position="58"/>
    </location>
</feature>
<feature type="glycosylation site" description="N-linked (GlcNAc...) asparagine" evidence="2">
    <location>
        <position position="3"/>
    </location>
</feature>
<feature type="glycosylation site" description="N-linked (GlcNAc...) asparagine" evidence="2">
    <location>
        <position position="21"/>
    </location>
</feature>
<feature type="glycosylation site" description="N-linked (GlcNAc...) asparagine" evidence="2">
    <location>
        <position position="568"/>
    </location>
</feature>
<protein>
    <recommendedName>
        <fullName evidence="13">Major facilitator superfamily multidrug transporter FLU1</fullName>
    </recommendedName>
    <alternativeName>
        <fullName evidence="13">Fluconazole resistance protein 1</fullName>
    </alternativeName>
</protein>
<dbReference type="EMBL" id="AF188621">
    <property type="protein sequence ID" value="AAF99573.1"/>
    <property type="molecule type" value="Genomic_DNA"/>
</dbReference>
<dbReference type="EMBL" id="AP006852">
    <property type="protein sequence ID" value="BAE44672.1"/>
    <property type="molecule type" value="Genomic_DNA"/>
</dbReference>
<dbReference type="EMBL" id="CP017629">
    <property type="protein sequence ID" value="AOW30519.1"/>
    <property type="molecule type" value="Genomic_DNA"/>
</dbReference>
<dbReference type="RefSeq" id="XP_721413.1">
    <property type="nucleotide sequence ID" value="XM_716320.1"/>
</dbReference>
<dbReference type="FunCoup" id="G1UB37">
    <property type="interactions" value="91"/>
</dbReference>
<dbReference type="STRING" id="237561.G1UB37"/>
<dbReference type="TCDB" id="2.A.1.2.123">
    <property type="family name" value="the major facilitator superfamily (mfs)"/>
</dbReference>
<dbReference type="GlyCosmos" id="G1UB37">
    <property type="glycosylation" value="3 sites, No reported glycans"/>
</dbReference>
<dbReference type="EnsemblFungi" id="C7_01520W_A-T">
    <property type="protein sequence ID" value="C7_01520W_A-T-p1"/>
    <property type="gene ID" value="C7_01520W_A"/>
</dbReference>
<dbReference type="GeneID" id="3637048"/>
<dbReference type="KEGG" id="cal:CAALFM_C701520WA"/>
<dbReference type="CGD" id="CAL0000199735">
    <property type="gene designation" value="FLU1"/>
</dbReference>
<dbReference type="VEuPathDB" id="FungiDB:C7_01520W_A"/>
<dbReference type="eggNOG" id="KOG0255">
    <property type="taxonomic scope" value="Eukaryota"/>
</dbReference>
<dbReference type="HOGENOM" id="CLU_008455_11_4_1"/>
<dbReference type="InParanoid" id="G1UB37"/>
<dbReference type="OMA" id="IPAFMGY"/>
<dbReference type="OrthoDB" id="9986881at2759"/>
<dbReference type="Proteomes" id="UP000000559">
    <property type="component" value="Chromosome 7"/>
</dbReference>
<dbReference type="GO" id="GO:0005886">
    <property type="term" value="C:plasma membrane"/>
    <property type="evidence" value="ECO:0000314"/>
    <property type="project" value="CGD"/>
</dbReference>
<dbReference type="GO" id="GO:0022857">
    <property type="term" value="F:transmembrane transporter activity"/>
    <property type="evidence" value="ECO:0000318"/>
    <property type="project" value="GO_Central"/>
</dbReference>
<dbReference type="GO" id="GO:0042910">
    <property type="term" value="F:xenobiotic transmembrane transporter activity"/>
    <property type="evidence" value="ECO:0000315"/>
    <property type="project" value="CGD"/>
</dbReference>
<dbReference type="GO" id="GO:0015903">
    <property type="term" value="P:fluconazole transport"/>
    <property type="evidence" value="ECO:0000316"/>
    <property type="project" value="CGD"/>
</dbReference>
<dbReference type="GO" id="GO:0015833">
    <property type="term" value="P:peptide transport"/>
    <property type="evidence" value="ECO:0000315"/>
    <property type="project" value="CGD"/>
</dbReference>
<dbReference type="GO" id="GO:0015848">
    <property type="term" value="P:spermidine transport"/>
    <property type="evidence" value="ECO:0000315"/>
    <property type="project" value="CGD"/>
</dbReference>
<dbReference type="GO" id="GO:0055085">
    <property type="term" value="P:transmembrane transport"/>
    <property type="evidence" value="ECO:0000318"/>
    <property type="project" value="GO_Central"/>
</dbReference>
<dbReference type="GO" id="GO:1990961">
    <property type="term" value="P:xenobiotic detoxification by transmembrane export across the plasma membrane"/>
    <property type="evidence" value="ECO:0000315"/>
    <property type="project" value="CGD"/>
</dbReference>
<dbReference type="CDD" id="cd17323">
    <property type="entry name" value="MFS_Tpo1_MDR_like"/>
    <property type="match status" value="1"/>
</dbReference>
<dbReference type="FunFam" id="1.20.1250.20:FF:000011">
    <property type="entry name" value="MFS multidrug transporter, putative"/>
    <property type="match status" value="1"/>
</dbReference>
<dbReference type="Gene3D" id="1.20.1250.20">
    <property type="entry name" value="MFS general substrate transporter like domains"/>
    <property type="match status" value="1"/>
</dbReference>
<dbReference type="InterPro" id="IPR011701">
    <property type="entry name" value="MFS"/>
</dbReference>
<dbReference type="InterPro" id="IPR020846">
    <property type="entry name" value="MFS_dom"/>
</dbReference>
<dbReference type="InterPro" id="IPR036259">
    <property type="entry name" value="MFS_trans_sf"/>
</dbReference>
<dbReference type="PANTHER" id="PTHR23502">
    <property type="entry name" value="MAJOR FACILITATOR SUPERFAMILY"/>
    <property type="match status" value="1"/>
</dbReference>
<dbReference type="PANTHER" id="PTHR23502:SF31">
    <property type="entry name" value="POLYAMINE TRANSPORTER 1"/>
    <property type="match status" value="1"/>
</dbReference>
<dbReference type="Pfam" id="PF07690">
    <property type="entry name" value="MFS_1"/>
    <property type="match status" value="1"/>
</dbReference>
<dbReference type="SUPFAM" id="SSF103473">
    <property type="entry name" value="MFS general substrate transporter"/>
    <property type="match status" value="1"/>
</dbReference>
<dbReference type="PROSITE" id="PS50850">
    <property type="entry name" value="MFS"/>
    <property type="match status" value="1"/>
</dbReference>
<reference key="1">
    <citation type="journal article" date="2000" name="Microbiology">
        <title>A novel multidrug efflux transporter gene of the major facilitator superfamily from Candida albicans (FLU1) conferring resistance to fluconazole.</title>
        <authorList>
            <person name="Calabrese D."/>
            <person name="Bille J."/>
            <person name="Sanglard D."/>
        </authorList>
    </citation>
    <scope>NUCLEOTIDE SEQUENCE [GENOMIC DNA]</scope>
    <scope>FUNCTION</scope>
    <scope>DISRUPTION PHENOTYPE</scope>
    <source>
        <strain>SC5314 / ATCC MYA-2876</strain>
    </source>
</reference>
<reference key="2">
    <citation type="journal article" date="2005" name="Genetics">
        <title>Sequence finishing and gene mapping for Candida albicans chromosome 7 and syntenic analysis against the Saccharomyces cerevisiae genome.</title>
        <authorList>
            <person name="Chibana H."/>
            <person name="Oka N."/>
            <person name="Nakayama H."/>
            <person name="Aoyama T."/>
            <person name="Magee B.B."/>
            <person name="Magee P.T."/>
            <person name="Mikami Y."/>
        </authorList>
    </citation>
    <scope>NUCLEOTIDE SEQUENCE [GENOMIC DNA]</scope>
    <source>
        <strain>SC5314 / ATCC MYA-2876</strain>
    </source>
</reference>
<reference key="3">
    <citation type="journal article" date="2004" name="Proc. Natl. Acad. Sci. U.S.A.">
        <title>The diploid genome sequence of Candida albicans.</title>
        <authorList>
            <person name="Jones T."/>
            <person name="Federspiel N.A."/>
            <person name="Chibana H."/>
            <person name="Dungan J."/>
            <person name="Kalman S."/>
            <person name="Magee B.B."/>
            <person name="Newport G."/>
            <person name="Thorstenson Y.R."/>
            <person name="Agabian N."/>
            <person name="Magee P.T."/>
            <person name="Davis R.W."/>
            <person name="Scherer S."/>
        </authorList>
    </citation>
    <scope>NUCLEOTIDE SEQUENCE [LARGE SCALE GENOMIC DNA]</scope>
    <scope>GENOME REANNOTATION</scope>
    <source>
        <strain>SC5314 / ATCC MYA-2876</strain>
    </source>
</reference>
<reference key="4">
    <citation type="journal article" date="2007" name="Genome Biol.">
        <title>Assembly of the Candida albicans genome into sixteen supercontigs aligned on the eight chromosomes.</title>
        <authorList>
            <person name="van het Hoog M."/>
            <person name="Rast T.J."/>
            <person name="Martchenko M."/>
            <person name="Grindle S."/>
            <person name="Dignard D."/>
            <person name="Hogues H."/>
            <person name="Cuomo C."/>
            <person name="Berriman M."/>
            <person name="Scherer S."/>
            <person name="Magee B.B."/>
            <person name="Whiteway M."/>
            <person name="Chibana H."/>
            <person name="Nantel A."/>
            <person name="Magee P.T."/>
        </authorList>
    </citation>
    <scope>GENOME REANNOTATION</scope>
    <source>
        <strain>SC5314 / ATCC MYA-2876</strain>
    </source>
</reference>
<reference key="5">
    <citation type="journal article" date="2013" name="Genome Biol.">
        <title>Assembly of a phased diploid Candida albicans genome facilitates allele-specific measurements and provides a simple model for repeat and indel structure.</title>
        <authorList>
            <person name="Muzzey D."/>
            <person name="Schwartz K."/>
            <person name="Weissman J.S."/>
            <person name="Sherlock G."/>
        </authorList>
    </citation>
    <scope>NUCLEOTIDE SEQUENCE [LARGE SCALE GENOMIC DNA]</scope>
    <scope>GENOME REANNOTATION</scope>
    <source>
        <strain>SC5314 / ATCC MYA-2876</strain>
    </source>
</reference>
<reference key="6">
    <citation type="journal article" date="2001" name="Antimicrob. Agents Chemother.">
        <title>Sensitive bioassay for determination of fluconazole concentrations in plasma using a Candida albicans mutant hypersusceptible to azoles.</title>
        <authorList>
            <person name="Marchetti O."/>
            <person name="Majcherczyk P.A."/>
            <person name="Glauser M.P."/>
            <person name="Bille J."/>
            <person name="Moreillon P."/>
            <person name="Sanglard D."/>
        </authorList>
    </citation>
    <scope>FUNCTION</scope>
</reference>
<reference key="7">
    <citation type="journal article" date="2009" name="Eukaryot. Cell">
        <title>Identification of the Candida albicans Cap1p regulon.</title>
        <authorList>
            <person name="Znaidi S."/>
            <person name="Barker K.S."/>
            <person name="Weber S."/>
            <person name="Alarco A.M."/>
            <person name="Liu T.T."/>
            <person name="Boucher G."/>
            <person name="Rogers P.D."/>
            <person name="Raymond M."/>
        </authorList>
    </citation>
    <scope>INDUCTION</scope>
</reference>
<reference key="8">
    <citation type="journal article" date="2009" name="Yakugaku Zasshi">
        <title>Mechanism of action of tetrandrine, a natural inhibitor of Candida albicans drug efflux pumps.</title>
        <authorList>
            <person name="Zhang H."/>
            <person name="Gao A."/>
            <person name="Li F."/>
            <person name="Zhang G."/>
            <person name="Ho H.I."/>
            <person name="Liao W."/>
        </authorList>
    </citation>
    <scope>INDUCTION</scope>
</reference>
<reference key="9">
    <citation type="journal article" date="2013" name="Antimicrob. Agents Chemother.">
        <title>Candida albicans flu1-mediated efflux of salivary histatin 5 reduces its cytosolic concentration and fungicidal activity.</title>
        <authorList>
            <person name="Li R."/>
            <person name="Kumar R."/>
            <person name="Tati S."/>
            <person name="Puri S."/>
            <person name="Edgerton M."/>
        </authorList>
    </citation>
    <scope>FUNCTION</scope>
    <scope>DISRUPTION PHENOTYPE</scope>
</reference>
<reference key="10">
    <citation type="journal article" date="2013" name="Chin. Med. J.">
        <title>Alcohol dehydrogenase I expression correlates with CDR1, CDR2 and FLU1 expression in Candida albicans from patients with vulvovaginal candidiasis.</title>
        <authorList>
            <person name="Guo H."/>
            <person name="Zhang X.L."/>
            <person name="Gao L.Q."/>
            <person name="Li S.X."/>
            <person name="Song Y.J."/>
            <person name="Zhang H."/>
        </authorList>
    </citation>
    <scope>INDUCTION</scope>
</reference>
<reference key="11">
    <citation type="journal article" date="2013" name="Pharm. Biol.">
        <title>Molecular mechanisms underlying the tetrandrine-mediated reversal of the fluconazole resistance of Candida albicans.</title>
        <authorList>
            <person name="Zhang X."/>
            <person name="Guo H."/>
            <person name="Gao L."/>
            <person name="Song Y."/>
            <person name="Li S."/>
            <person name="Zhang H."/>
        </authorList>
    </citation>
    <scope>INDUCTION</scope>
</reference>
<reference key="12">
    <citation type="journal article" date="2014" name="Mycoses">
        <title>Vulvovaginal candidiasis: species distribution, fluconazole resistance and drug efflux pump gene overexpression.</title>
        <authorList>
            <person name="Zhang J.Y."/>
            <person name="Liu J.H."/>
            <person name="Liu F.D."/>
            <person name="Xia Y.H."/>
            <person name="Wang J."/>
            <person name="Liu X."/>
            <person name="Zhang Z.Q."/>
            <person name="Zhu N."/>
            <person name="Yan Y."/>
            <person name="Ying Y."/>
            <person name="Huang X.T."/>
        </authorList>
    </citation>
    <scope>INDUCTION</scope>
</reference>
<reference key="13">
    <citation type="journal article" date="2017" name="PLoS Pathog.">
        <title>An acquired mechanism of antifungal drug resistance simultaneously enables Candida albicans to escape from intrinsic host defenses.</title>
        <authorList>
            <person name="Hampe I.A.I."/>
            <person name="Friedman J."/>
            <person name="Edgerton M."/>
            <person name="Morschhaeuser J."/>
        </authorList>
    </citation>
    <scope>FUNCTION</scope>
    <scope>INDUCTION</scope>
</reference>
<evidence type="ECO:0000255" key="1"/>
<evidence type="ECO:0000255" key="2">
    <source>
        <dbReference type="PROSITE-ProRule" id="PRU00498"/>
    </source>
</evidence>
<evidence type="ECO:0000256" key="3">
    <source>
        <dbReference type="SAM" id="MobiDB-lite"/>
    </source>
</evidence>
<evidence type="ECO:0000269" key="4">
    <source>
    </source>
</evidence>
<evidence type="ECO:0000269" key="5">
    <source>
    </source>
</evidence>
<evidence type="ECO:0000269" key="6">
    <source>
    </source>
</evidence>
<evidence type="ECO:0000269" key="7">
    <source>
    </source>
</evidence>
<evidence type="ECO:0000269" key="8">
    <source>
    </source>
</evidence>
<evidence type="ECO:0000269" key="9">
    <source>
    </source>
</evidence>
<evidence type="ECO:0000269" key="10">
    <source>
    </source>
</evidence>
<evidence type="ECO:0000269" key="11">
    <source>
    </source>
</evidence>
<evidence type="ECO:0000269" key="12">
    <source>
    </source>
</evidence>
<evidence type="ECO:0000303" key="13">
    <source>
    </source>
</evidence>
<evidence type="ECO:0000305" key="14"/>
<accession>G1UB37</accession>
<accession>Q5AGW2</accession>
<accession>Q9HF77</accession>
<proteinExistence type="evidence at transcript level"/>
<keyword id="KW-1003">Cell membrane</keyword>
<keyword id="KW-0325">Glycoprotein</keyword>
<keyword id="KW-0472">Membrane</keyword>
<keyword id="KW-1185">Reference proteome</keyword>
<keyword id="KW-0812">Transmembrane</keyword>
<keyword id="KW-1133">Transmembrane helix</keyword>
<keyword id="KW-0813">Transport</keyword>
<sequence>MNNNTNSNHNDIAPEATITQNTTTSVSNDELQHITNNNNVNVQSYVGPTDSVESSSNTADEENEINSFNAQNVKDYEANVGGELPPDDELSRIESNTELSRRATRSIMNTESLLRTASQSSKPLPPMGGGKEYPPMLGSRDPYVVAFDGPDDPDHPHNYPTWKKILYCASVGLAALSVSMGSAMFSQASADIMQIYHIGWTPATLTTSLFVFGFASGPVIYGPLSELFGRKLVMVPSCLGYVCFSFAVATAKDIQTIMICRFFAGFIGAAPLVVAPAVMADMFNNRYRGTAIAIFSMLLFGGPMLAPILGAFTVKNSALGWRWTSYFCGIIGSLALFMNTFLLQETHHPLILTRRAEELRRRTGNWGIYAPHEELKLSMKEIVENNIARPLKMLFTEPILFLVSLYNAFIYGMLYLFLTAIPLIFLGEYHFVQGVAELPYLAMLIGILIGGGMIMLFEKRYIKAMEDNGGKIIPEKRLEPMMVGGFTFVIGIFWLGWTGNYPQHVHWIVPVIGAAFVGNGLMLIFLPCFNYIIDCYLLYAATALAGNTFIRSAFGAVFPLFARQMFTNLTIKWASTLLGCIGILLLPMPFVFYYYGKSLRHKSKFAFVLE</sequence>
<name>FLU1_CANAL</name>
<comment type="function">
    <text evidence="4 5 8 12">Major facilitator superfamily transporter that mediates resistance to structurally and functionally unrelated compounds including cycloheximide but also azoles such as fuconazole, ketoconazole and itraconazole (PubMed:11065353, PubMed:11181345). Also mediates efflux of histatin 5, a salivary human antimicrobial peptide, and is responsible for reduction of its toxicity in C.albicans (PubMed:23380720, PubMed:28953977).</text>
</comment>
<comment type="subcellular location">
    <subcellularLocation>
        <location evidence="14">Cell membrane</location>
        <topology evidence="1">Multi-pass membrane protein</topology>
    </subcellularLocation>
</comment>
<comment type="induction">
    <text evidence="6 7 9 10 11 12">Expression is positively regulated by the CAP1 transcription activator (PubMed:19395663). Expression is also regulated by the MRR1 transcription factor (PubMed:28953977). Expression is inhibited by tetrandrine (TET), a compound known to act in a synergistic manner with fluconazole (PubMed:19420894, PubMed:23527892). Expression is increased in clinical azole-resistant isolates (PubMed:23769565, PubMed:24962255).</text>
</comment>
<comment type="disruption phenotype">
    <text evidence="4 8">Increases the susceptibility to mycophenolic acid, fuconazole, ketoconazole and itraconazole (PubMed:11065353). Reduces the efflux of spermidine as well as of histatin 5, a salivary human antimicrobial peptide that is toxic to the opportunistic yeast C.albicans (PubMed:23380720). Also leads to reduced biofilm formation (PubMed:23380720).</text>
</comment>
<comment type="similarity">
    <text evidence="14">Belongs to the major facilitator superfamily. DHA1 family. Polyamines/proton antiporter (TC 2.A.1.2.16) subfamily.</text>
</comment>
<gene>
    <name evidence="13" type="primary">FLU1</name>
    <name type="ordered locus">CAALFM_C701520WA</name>
    <name type="ORF">orf19.6577</name>
</gene>
<organism>
    <name type="scientific">Candida albicans (strain SC5314 / ATCC MYA-2876)</name>
    <name type="common">Yeast</name>
    <dbReference type="NCBI Taxonomy" id="237561"/>
    <lineage>
        <taxon>Eukaryota</taxon>
        <taxon>Fungi</taxon>
        <taxon>Dikarya</taxon>
        <taxon>Ascomycota</taxon>
        <taxon>Saccharomycotina</taxon>
        <taxon>Pichiomycetes</taxon>
        <taxon>Debaryomycetaceae</taxon>
        <taxon>Candida/Lodderomyces clade</taxon>
        <taxon>Candida</taxon>
    </lineage>
</organism>